<reference key="1">
    <citation type="journal article" date="2004" name="Science">
        <title>The Ashbya gossypii genome as a tool for mapping the ancient Saccharomyces cerevisiae genome.</title>
        <authorList>
            <person name="Dietrich F.S."/>
            <person name="Voegeli S."/>
            <person name="Brachat S."/>
            <person name="Lerch A."/>
            <person name="Gates K."/>
            <person name="Steiner S."/>
            <person name="Mohr C."/>
            <person name="Poehlmann R."/>
            <person name="Luedi P."/>
            <person name="Choi S."/>
            <person name="Wing R.A."/>
            <person name="Flavier A."/>
            <person name="Gaffney T.D."/>
            <person name="Philippsen P."/>
        </authorList>
    </citation>
    <scope>NUCLEOTIDE SEQUENCE [LARGE SCALE GENOMIC DNA]</scope>
    <source>
        <strain>ATCC 10895 / CBS 109.51 / FGSC 9923 / NRRL Y-1056</strain>
    </source>
</reference>
<reference key="2">
    <citation type="journal article" date="2013" name="G3 (Bethesda)">
        <title>Genomes of Ashbya fungi isolated from insects reveal four mating-type loci, numerous translocations, lack of transposons, and distinct gene duplications.</title>
        <authorList>
            <person name="Dietrich F.S."/>
            <person name="Voegeli S."/>
            <person name="Kuo S."/>
            <person name="Philippsen P."/>
        </authorList>
    </citation>
    <scope>GENOME REANNOTATION</scope>
    <source>
        <strain>ATCC 10895 / CBS 109.51 / FGSC 9923 / NRRL Y-1056</strain>
    </source>
</reference>
<sequence>MSGQLNVAEDSVLLDDISISSIQPIVSDVPAAEDVGDEDHISGASIAENRPKDPTLVKYHAACQRGDLKTVKDMIEAGVIDVKADWDEEEQVSGLHWASANNRLNLVRYLIAQGADVNIKGGDLEATPLHWASKSGYVYIVHCLLEHGADPLITDRQGYNLLHTSTFSSEVMLITYVLFTGQIPVDSPDPTGKTALHWAAYQGDPNTVEALLKFDADVRVVDTGGFTPLHWATVKGHPHVLKALIEHGSDVFLKNNDGKNALMIAQEMNTQKALQNALYECGFNKDGFAIRKYFKNPMHAKMVTFFTPWLILGLILSFFAYFSILLAILGCLLTVLAAGYGLYNFVFPSFILMKRIVIFKTPLLAGILSGTIFWLLYVWLFKMLPATFDDEPILNLTVFALFAGVVFLLTKLLQSDPGYIVPATDHNQIRATIIELLRVGKYDSKHFCIHSWIRLPLRAKYKRFVHSVILRYDHYCPWIYNYIGFRNHKIFIYFILLLDLGILALAKLCLEYFDELKDHAKNKDALKCSILSKDLCAGFTYDPFTLFLLEWVCVQGMWILALSFVQFFECLKGVTEHEFAHWQRRNRGVVGREHVFNTAPEELMEEDPEEERNKLRSLGAAGQRHCCSTLTTATGFDRFLSVIGSSLGRQPRTTHNPINYPIETDYGWKQNLKDFWLTSDISAPMWRRILLPPVGTRGLLNGQEVDYQKLYNLPERVISIEEIV</sequence>
<dbReference type="EC" id="2.3.1.225"/>
<dbReference type="EMBL" id="AE016818">
    <property type="protein sequence ID" value="AAS53067.1"/>
    <property type="molecule type" value="Genomic_DNA"/>
</dbReference>
<dbReference type="RefSeq" id="NP_985243.1">
    <property type="nucleotide sequence ID" value="NM_210597.1"/>
</dbReference>
<dbReference type="SMR" id="Q755Y0"/>
<dbReference type="FunCoup" id="Q755Y0">
    <property type="interactions" value="613"/>
</dbReference>
<dbReference type="STRING" id="284811.Q755Y0"/>
<dbReference type="EnsemblFungi" id="AAS53067">
    <property type="protein sequence ID" value="AAS53067"/>
    <property type="gene ID" value="AGOS_AER388C"/>
</dbReference>
<dbReference type="GeneID" id="4621459"/>
<dbReference type="KEGG" id="ago:AGOS_AER388C"/>
<dbReference type="eggNOG" id="KOG0509">
    <property type="taxonomic scope" value="Eukaryota"/>
</dbReference>
<dbReference type="HOGENOM" id="CLU_012510_1_1_1"/>
<dbReference type="InParanoid" id="Q755Y0"/>
<dbReference type="OMA" id="FWVGFRY"/>
<dbReference type="OrthoDB" id="6781668at2759"/>
<dbReference type="Proteomes" id="UP000000591">
    <property type="component" value="Chromosome V"/>
</dbReference>
<dbReference type="GO" id="GO:0031901">
    <property type="term" value="C:early endosome membrane"/>
    <property type="evidence" value="ECO:0007669"/>
    <property type="project" value="UniProtKB-SubCell"/>
</dbReference>
<dbReference type="GO" id="GO:0000139">
    <property type="term" value="C:Golgi membrane"/>
    <property type="evidence" value="ECO:0007669"/>
    <property type="project" value="UniProtKB-SubCell"/>
</dbReference>
<dbReference type="GO" id="GO:0031683">
    <property type="term" value="F:G-protein beta/gamma-subunit complex binding"/>
    <property type="evidence" value="ECO:0007669"/>
    <property type="project" value="EnsemblFungi"/>
</dbReference>
<dbReference type="GO" id="GO:0019706">
    <property type="term" value="F:protein-cysteine S-palmitoyltransferase activity"/>
    <property type="evidence" value="ECO:0007669"/>
    <property type="project" value="UniProtKB-EC"/>
</dbReference>
<dbReference type="GO" id="GO:0090029">
    <property type="term" value="P:negative regulation of pheromone-dependent signal transduction involved in conjugation with cellular fusion"/>
    <property type="evidence" value="ECO:0007669"/>
    <property type="project" value="EnsemblFungi"/>
</dbReference>
<dbReference type="GO" id="GO:0006612">
    <property type="term" value="P:protein targeting to membrane"/>
    <property type="evidence" value="ECO:0007669"/>
    <property type="project" value="EnsemblFungi"/>
</dbReference>
<dbReference type="GO" id="GO:0030100">
    <property type="term" value="P:regulation of endocytosis"/>
    <property type="evidence" value="ECO:0007669"/>
    <property type="project" value="EnsemblFungi"/>
</dbReference>
<dbReference type="Gene3D" id="1.25.40.20">
    <property type="entry name" value="Ankyrin repeat-containing domain"/>
    <property type="match status" value="3"/>
</dbReference>
<dbReference type="InterPro" id="IPR002110">
    <property type="entry name" value="Ankyrin_rpt"/>
</dbReference>
<dbReference type="InterPro" id="IPR036770">
    <property type="entry name" value="Ankyrin_rpt-contain_sf"/>
</dbReference>
<dbReference type="InterPro" id="IPR001594">
    <property type="entry name" value="Palmitoyltrfase_DHHC"/>
</dbReference>
<dbReference type="PANTHER" id="PTHR24161">
    <property type="entry name" value="ANK_REP_REGION DOMAIN-CONTAINING PROTEIN-RELATED"/>
    <property type="match status" value="1"/>
</dbReference>
<dbReference type="PANTHER" id="PTHR24161:SF85">
    <property type="entry name" value="PALMITOYLTRANSFERASE HIP14"/>
    <property type="match status" value="1"/>
</dbReference>
<dbReference type="Pfam" id="PF12796">
    <property type="entry name" value="Ank_2"/>
    <property type="match status" value="2"/>
</dbReference>
<dbReference type="Pfam" id="PF01529">
    <property type="entry name" value="DHHC"/>
    <property type="match status" value="1"/>
</dbReference>
<dbReference type="SMART" id="SM00248">
    <property type="entry name" value="ANK"/>
    <property type="match status" value="5"/>
</dbReference>
<dbReference type="SUPFAM" id="SSF48403">
    <property type="entry name" value="Ankyrin repeat"/>
    <property type="match status" value="1"/>
</dbReference>
<dbReference type="PROSITE" id="PS50297">
    <property type="entry name" value="ANK_REP_REGION"/>
    <property type="match status" value="1"/>
</dbReference>
<dbReference type="PROSITE" id="PS50088">
    <property type="entry name" value="ANK_REPEAT"/>
    <property type="match status" value="4"/>
</dbReference>
<dbReference type="PROSITE" id="PS50216">
    <property type="entry name" value="DHHC"/>
    <property type="match status" value="1"/>
</dbReference>
<evidence type="ECO:0000250" key="1"/>
<evidence type="ECO:0000255" key="2"/>
<evidence type="ECO:0000255" key="3">
    <source>
        <dbReference type="PROSITE-ProRule" id="PRU00067"/>
    </source>
</evidence>
<evidence type="ECO:0000305" key="4"/>
<accession>Q755Y0</accession>
<protein>
    <recommendedName>
        <fullName>Palmitoyltransferase AKR1</fullName>
        <ecNumber>2.3.1.225</ecNumber>
    </recommendedName>
    <alternativeName>
        <fullName>Ankyrin repeat-containing protein AKR1</fullName>
    </alternativeName>
</protein>
<proteinExistence type="inferred from homology"/>
<comment type="function">
    <text evidence="1">Palmitoyltransferase specific for casein kinase 1.</text>
</comment>
<comment type="catalytic activity">
    <reaction>
        <text>L-cysteinyl-[protein] + hexadecanoyl-CoA = S-hexadecanoyl-L-cysteinyl-[protein] + CoA</text>
        <dbReference type="Rhea" id="RHEA:36683"/>
        <dbReference type="Rhea" id="RHEA-COMP:10131"/>
        <dbReference type="Rhea" id="RHEA-COMP:11032"/>
        <dbReference type="ChEBI" id="CHEBI:29950"/>
        <dbReference type="ChEBI" id="CHEBI:57287"/>
        <dbReference type="ChEBI" id="CHEBI:57379"/>
        <dbReference type="ChEBI" id="CHEBI:74151"/>
        <dbReference type="EC" id="2.3.1.225"/>
    </reaction>
</comment>
<comment type="subcellular location">
    <subcellularLocation>
        <location>Early endosome membrane</location>
        <topology>Multi-pass membrane protein</topology>
    </subcellularLocation>
    <subcellularLocation>
        <location evidence="1">Golgi apparatus membrane</location>
        <topology evidence="1">Multi-pass membrane protein</topology>
    </subcellularLocation>
</comment>
<comment type="domain">
    <text evidence="1">The DHHC domain is required for palmitoyltransferase activity.</text>
</comment>
<comment type="similarity">
    <text evidence="4">Belongs to the DHHC palmitoyltransferase family. AKR/ZDHHC17 subfamily.</text>
</comment>
<keyword id="KW-0012">Acyltransferase</keyword>
<keyword id="KW-0040">ANK repeat</keyword>
<keyword id="KW-0967">Endosome</keyword>
<keyword id="KW-0333">Golgi apparatus</keyword>
<keyword id="KW-0449">Lipoprotein</keyword>
<keyword id="KW-0472">Membrane</keyword>
<keyword id="KW-0564">Palmitate</keyword>
<keyword id="KW-1185">Reference proteome</keyword>
<keyword id="KW-0677">Repeat</keyword>
<keyword id="KW-0808">Transferase</keyword>
<keyword id="KW-0812">Transmembrane</keyword>
<keyword id="KW-1133">Transmembrane helix</keyword>
<name>AKR1_EREGS</name>
<organism>
    <name type="scientific">Eremothecium gossypii (strain ATCC 10895 / CBS 109.51 / FGSC 9923 / NRRL Y-1056)</name>
    <name type="common">Yeast</name>
    <name type="synonym">Ashbya gossypii</name>
    <dbReference type="NCBI Taxonomy" id="284811"/>
    <lineage>
        <taxon>Eukaryota</taxon>
        <taxon>Fungi</taxon>
        <taxon>Dikarya</taxon>
        <taxon>Ascomycota</taxon>
        <taxon>Saccharomycotina</taxon>
        <taxon>Saccharomycetes</taxon>
        <taxon>Saccharomycetales</taxon>
        <taxon>Saccharomycetaceae</taxon>
        <taxon>Eremothecium</taxon>
    </lineage>
</organism>
<gene>
    <name type="primary">AKR1</name>
    <name type="ordered locus">AER388C</name>
</gene>
<feature type="chain" id="PRO_0000212916" description="Palmitoyltransferase AKR1">
    <location>
        <begin position="1"/>
        <end position="724"/>
    </location>
</feature>
<feature type="topological domain" description="Cytoplasmic" evidence="2">
    <location>
        <begin position="1"/>
        <end position="308"/>
    </location>
</feature>
<feature type="transmembrane region" description="Helical" evidence="2">
    <location>
        <begin position="309"/>
        <end position="329"/>
    </location>
</feature>
<feature type="topological domain" description="Lumenal" evidence="2">
    <location>
        <begin position="330"/>
        <end position="331"/>
    </location>
</feature>
<feature type="transmembrane region" description="Helical" evidence="2">
    <location>
        <begin position="332"/>
        <end position="352"/>
    </location>
</feature>
<feature type="topological domain" description="Cytoplasmic" evidence="2">
    <location>
        <begin position="353"/>
        <end position="360"/>
    </location>
</feature>
<feature type="transmembrane region" description="Helical" evidence="2">
    <location>
        <begin position="361"/>
        <end position="381"/>
    </location>
</feature>
<feature type="topological domain" description="Lumenal" evidence="2">
    <location>
        <begin position="382"/>
        <end position="392"/>
    </location>
</feature>
<feature type="transmembrane region" description="Helical" evidence="2">
    <location>
        <begin position="393"/>
        <end position="413"/>
    </location>
</feature>
<feature type="topological domain" description="Cytoplasmic" evidence="2">
    <location>
        <begin position="414"/>
        <end position="489"/>
    </location>
</feature>
<feature type="transmembrane region" description="Helical" evidence="2">
    <location>
        <begin position="490"/>
        <end position="510"/>
    </location>
</feature>
<feature type="topological domain" description="Lumenal" evidence="2">
    <location>
        <begin position="511"/>
        <end position="543"/>
    </location>
</feature>
<feature type="transmembrane region" description="Helical" evidence="2">
    <location>
        <begin position="544"/>
        <end position="564"/>
    </location>
</feature>
<feature type="topological domain" description="Cytoplasmic" evidence="2">
    <location>
        <begin position="565"/>
        <end position="724"/>
    </location>
</feature>
<feature type="repeat" description="ANK 1">
    <location>
        <begin position="54"/>
        <end position="84"/>
    </location>
</feature>
<feature type="repeat" description="ANK 2">
    <location>
        <begin position="90"/>
        <end position="119"/>
    </location>
</feature>
<feature type="repeat" description="ANK 3">
    <location>
        <begin position="124"/>
        <end position="153"/>
    </location>
</feature>
<feature type="repeat" description="ANK 4">
    <location>
        <begin position="157"/>
        <end position="187"/>
    </location>
</feature>
<feature type="repeat" description="ANK 5">
    <location>
        <begin position="191"/>
        <end position="220"/>
    </location>
</feature>
<feature type="repeat" description="ANK 6">
    <location>
        <begin position="224"/>
        <end position="253"/>
    </location>
</feature>
<feature type="domain" description="DHHC" evidence="3">
    <location>
        <begin position="446"/>
        <end position="496"/>
    </location>
</feature>
<feature type="active site" description="S-palmitoyl cysteine intermediate" evidence="1">
    <location>
        <position position="476"/>
    </location>
</feature>